<name>CDN1B_FELCA</name>
<feature type="chain" id="PRO_0000190083" description="Cyclin-dependent kinase inhibitor 1B">
    <location>
        <begin position="1"/>
        <end position="198"/>
    </location>
</feature>
<feature type="region of interest" description="Disordered" evidence="5">
    <location>
        <begin position="1"/>
        <end position="22"/>
    </location>
</feature>
<feature type="region of interest" description="Interaction with CDK2" evidence="3">
    <location>
        <begin position="51"/>
        <end position="91"/>
    </location>
</feature>
<feature type="region of interest" description="Disordered" evidence="5">
    <location>
        <begin position="87"/>
        <end position="198"/>
    </location>
</feature>
<feature type="short sequence motif" description="Nuclear localization signal" evidence="4">
    <location>
        <begin position="153"/>
        <end position="169"/>
    </location>
</feature>
<feature type="compositionally biased region" description="Polar residues" evidence="5">
    <location>
        <begin position="1"/>
        <end position="11"/>
    </location>
</feature>
<feature type="compositionally biased region" description="Polar residues" evidence="5">
    <location>
        <begin position="104"/>
        <end position="113"/>
    </location>
</feature>
<feature type="compositionally biased region" description="Basic and acidic residues" evidence="5">
    <location>
        <begin position="126"/>
        <end position="137"/>
    </location>
</feature>
<feature type="compositionally biased region" description="Polar residues" evidence="5">
    <location>
        <begin position="175"/>
        <end position="186"/>
    </location>
</feature>
<feature type="modified residue" description="Phosphoserine; by UHMK1" evidence="3">
    <location>
        <position position="10"/>
    </location>
</feature>
<feature type="modified residue" description="Phosphotyrosine; by SRC" evidence="3">
    <location>
        <position position="74"/>
    </location>
</feature>
<feature type="modified residue" description="Phosphotyrosine; by ABL, LYN and SRC" evidence="3">
    <location>
        <position position="88"/>
    </location>
</feature>
<feature type="modified residue" description="Phosphotyrosine" evidence="3">
    <location>
        <position position="89"/>
    </location>
</feature>
<feature type="modified residue" description="Phosphothreonine; by CaMK1, PKB/AKT1 and PIM1" evidence="3">
    <location>
        <position position="157"/>
    </location>
</feature>
<feature type="modified residue" description="Phosphothreonine" evidence="2">
    <location>
        <position position="170"/>
    </location>
</feature>
<feature type="modified residue" description="Phosphothreonine; by PKB/AKT1, CDK1 and CDK2" evidence="3">
    <location>
        <position position="187"/>
    </location>
</feature>
<feature type="modified residue" description="Phosphothreonine; by CaMK1, PKB/AKT1, RPS6KA1, RPS6KA3 and PIM1" evidence="3">
    <location>
        <position position="198"/>
    </location>
</feature>
<evidence type="ECO:0000250" key="1"/>
<evidence type="ECO:0000250" key="2">
    <source>
        <dbReference type="UniProtKB" id="P46414"/>
    </source>
</evidence>
<evidence type="ECO:0000250" key="3">
    <source>
        <dbReference type="UniProtKB" id="P46527"/>
    </source>
</evidence>
<evidence type="ECO:0000255" key="4"/>
<evidence type="ECO:0000256" key="5">
    <source>
        <dbReference type="SAM" id="MobiDB-lite"/>
    </source>
</evidence>
<evidence type="ECO:0000305" key="6"/>
<protein>
    <recommendedName>
        <fullName>Cyclin-dependent kinase inhibitor 1B</fullName>
    </recommendedName>
    <alternativeName>
        <fullName>Cyclin-dependent kinase inhibitor p27</fullName>
    </alternativeName>
    <alternativeName>
        <fullName>p27Kip1</fullName>
    </alternativeName>
</protein>
<organism>
    <name type="scientific">Felis catus</name>
    <name type="common">Cat</name>
    <name type="synonym">Felis silvestris catus</name>
    <dbReference type="NCBI Taxonomy" id="9685"/>
    <lineage>
        <taxon>Eukaryota</taxon>
        <taxon>Metazoa</taxon>
        <taxon>Chordata</taxon>
        <taxon>Craniata</taxon>
        <taxon>Vertebrata</taxon>
        <taxon>Euteleostomi</taxon>
        <taxon>Mammalia</taxon>
        <taxon>Eutheria</taxon>
        <taxon>Laurasiatheria</taxon>
        <taxon>Carnivora</taxon>
        <taxon>Feliformia</taxon>
        <taxon>Felidae</taxon>
        <taxon>Felinae</taxon>
        <taxon>Felis</taxon>
    </lineage>
</organism>
<sequence>MSNVRVSNGSPSLERMDARQAEYPKPSACRNLFGPVNHEELTRDLEKHCRDMEEASQRKWNFDFQNHKPLEGKYEWQEVEKGSLPEFYYRPPRPPKGACKVPAQESQDVSGNRQAVPLIGSQANTEDTHLVDQKTDTSDNQTGLAEQCPGIRKRPATDDSSPQNKRANRTEENVSDGSPNAGSVEQTPKKPGLRRRQT</sequence>
<gene>
    <name type="primary">CDKN1B</name>
    <name type="synonym">KIP1</name>
</gene>
<reference key="1">
    <citation type="journal article" date="1997" name="Gene">
        <title>Cloning and chromosome mapping of the feline genes p21WAF1 and p27Kip1.</title>
        <authorList>
            <person name="Okuda M."/>
            <person name="Minehata K."/>
            <person name="Setoguchi A."/>
            <person name="Cho K.-W."/>
            <person name="Nakamura N."/>
            <person name="Nishigaki K."/>
            <person name="Watari T."/>
            <person name="Cevario S."/>
            <person name="O'Brien S.J."/>
            <person name="Tsujimoto H."/>
            <person name="Hasegawa A."/>
        </authorList>
    </citation>
    <scope>NUCLEOTIDE SEQUENCE [MRNA]</scope>
    <source>
        <tissue>Lymph node</tissue>
    </source>
</reference>
<dbReference type="EMBL" id="D84649">
    <property type="protein sequence ID" value="BAA23167.1"/>
    <property type="molecule type" value="mRNA"/>
</dbReference>
<dbReference type="RefSeq" id="NP_001009870.1">
    <property type="nucleotide sequence ID" value="NM_001009870.1"/>
</dbReference>
<dbReference type="SMR" id="O19001"/>
<dbReference type="FunCoup" id="O19001">
    <property type="interactions" value="36"/>
</dbReference>
<dbReference type="STRING" id="9685.ENSFCAP00000044526"/>
<dbReference type="PaxDb" id="9685-ENSFCAP00000023343"/>
<dbReference type="Ensembl" id="ENSFCAT00000058117.2">
    <property type="protein sequence ID" value="ENSFCAP00000044526.1"/>
    <property type="gene ID" value="ENSFCAG00000043547.2"/>
</dbReference>
<dbReference type="GeneID" id="493958"/>
<dbReference type="KEGG" id="fca:493958"/>
<dbReference type="CTD" id="1027"/>
<dbReference type="eggNOG" id="KOG4743">
    <property type="taxonomic scope" value="Eukaryota"/>
</dbReference>
<dbReference type="GeneTree" id="ENSGT00940000159852"/>
<dbReference type="HOGENOM" id="CLU_077692_2_0_1"/>
<dbReference type="InParanoid" id="O19001"/>
<dbReference type="OMA" id="THLRDQK"/>
<dbReference type="OrthoDB" id="6373236at2759"/>
<dbReference type="TreeFam" id="TF101038"/>
<dbReference type="Proteomes" id="UP000011712">
    <property type="component" value="Chromosome B4"/>
</dbReference>
<dbReference type="Bgee" id="ENSFCAG00000043547">
    <property type="expression patterns" value="Expressed in uterus and 9 other cell types or tissues"/>
</dbReference>
<dbReference type="GO" id="GO:0005813">
    <property type="term" value="C:centrosome"/>
    <property type="evidence" value="ECO:0007669"/>
    <property type="project" value="Ensembl"/>
</dbReference>
<dbReference type="GO" id="GO:0036064">
    <property type="term" value="C:ciliary basal body"/>
    <property type="evidence" value="ECO:0007669"/>
    <property type="project" value="Ensembl"/>
</dbReference>
<dbReference type="GO" id="GO:0031464">
    <property type="term" value="C:Cul4A-RING E3 ubiquitin ligase complex"/>
    <property type="evidence" value="ECO:0007669"/>
    <property type="project" value="Ensembl"/>
</dbReference>
<dbReference type="GO" id="GO:0005737">
    <property type="term" value="C:cytoplasm"/>
    <property type="evidence" value="ECO:0000318"/>
    <property type="project" value="GO_Central"/>
</dbReference>
<dbReference type="GO" id="GO:0005829">
    <property type="term" value="C:cytosol"/>
    <property type="evidence" value="ECO:0007669"/>
    <property type="project" value="Ensembl"/>
</dbReference>
<dbReference type="GO" id="GO:0005768">
    <property type="term" value="C:endosome"/>
    <property type="evidence" value="ECO:0007669"/>
    <property type="project" value="UniProtKB-SubCell"/>
</dbReference>
<dbReference type="GO" id="GO:0005654">
    <property type="term" value="C:nucleoplasm"/>
    <property type="evidence" value="ECO:0007669"/>
    <property type="project" value="Ensembl"/>
</dbReference>
<dbReference type="GO" id="GO:0005634">
    <property type="term" value="C:nucleus"/>
    <property type="evidence" value="ECO:0000318"/>
    <property type="project" value="GO_Central"/>
</dbReference>
<dbReference type="GO" id="GO:0030332">
    <property type="term" value="F:cyclin binding"/>
    <property type="evidence" value="ECO:0007669"/>
    <property type="project" value="Ensembl"/>
</dbReference>
<dbReference type="GO" id="GO:0004861">
    <property type="term" value="F:cyclin-dependent protein serine/threonine kinase inhibitor activity"/>
    <property type="evidence" value="ECO:0000250"/>
    <property type="project" value="UniProtKB"/>
</dbReference>
<dbReference type="GO" id="GO:0019901">
    <property type="term" value="F:protein kinase binding"/>
    <property type="evidence" value="ECO:0007669"/>
    <property type="project" value="Ensembl"/>
</dbReference>
<dbReference type="GO" id="GO:0019903">
    <property type="term" value="F:protein phosphatase binding"/>
    <property type="evidence" value="ECO:0007669"/>
    <property type="project" value="Ensembl"/>
</dbReference>
<dbReference type="GO" id="GO:0044877">
    <property type="term" value="F:protein-containing complex binding"/>
    <property type="evidence" value="ECO:0007669"/>
    <property type="project" value="Ensembl"/>
</dbReference>
<dbReference type="GO" id="GO:0051087">
    <property type="term" value="F:protein-folding chaperone binding"/>
    <property type="evidence" value="ECO:0000318"/>
    <property type="project" value="GO_Central"/>
</dbReference>
<dbReference type="GO" id="GO:0048102">
    <property type="term" value="P:autophagic cell death"/>
    <property type="evidence" value="ECO:0007669"/>
    <property type="project" value="Ensembl"/>
</dbReference>
<dbReference type="GO" id="GO:0071236">
    <property type="term" value="P:cellular response to antibiotic"/>
    <property type="evidence" value="ECO:0007669"/>
    <property type="project" value="Ensembl"/>
</dbReference>
<dbReference type="GO" id="GO:0071285">
    <property type="term" value="P:cellular response to lithium ion"/>
    <property type="evidence" value="ECO:0007669"/>
    <property type="project" value="Ensembl"/>
</dbReference>
<dbReference type="GO" id="GO:1904019">
    <property type="term" value="P:epithelial cell apoptotic process"/>
    <property type="evidence" value="ECO:0007669"/>
    <property type="project" value="Ensembl"/>
</dbReference>
<dbReference type="GO" id="GO:0060767">
    <property type="term" value="P:epithelial cell proliferation involved in prostate gland development"/>
    <property type="evidence" value="ECO:0007669"/>
    <property type="project" value="Ensembl"/>
</dbReference>
<dbReference type="GO" id="GO:0000082">
    <property type="term" value="P:G1/S transition of mitotic cell cycle"/>
    <property type="evidence" value="ECO:0000318"/>
    <property type="project" value="GO_Central"/>
</dbReference>
<dbReference type="GO" id="GO:0007507">
    <property type="term" value="P:heart development"/>
    <property type="evidence" value="ECO:0007669"/>
    <property type="project" value="Ensembl"/>
</dbReference>
<dbReference type="GO" id="GO:0048839">
    <property type="term" value="P:inner ear development"/>
    <property type="evidence" value="ECO:0007669"/>
    <property type="project" value="Ensembl"/>
</dbReference>
<dbReference type="GO" id="GO:1905179">
    <property type="term" value="P:negative regulation of cardiac muscle tissue regeneration"/>
    <property type="evidence" value="ECO:0007669"/>
    <property type="project" value="Ensembl"/>
</dbReference>
<dbReference type="GO" id="GO:0030308">
    <property type="term" value="P:negative regulation of cell growth"/>
    <property type="evidence" value="ECO:0007669"/>
    <property type="project" value="Ensembl"/>
</dbReference>
<dbReference type="GO" id="GO:0045736">
    <property type="term" value="P:negative regulation of cyclin-dependent protein serine/threonine kinase activity"/>
    <property type="evidence" value="ECO:0000250"/>
    <property type="project" value="UniProtKB"/>
</dbReference>
<dbReference type="GO" id="GO:0045892">
    <property type="term" value="P:negative regulation of DNA-templated transcription"/>
    <property type="evidence" value="ECO:0007669"/>
    <property type="project" value="Ensembl"/>
</dbReference>
<dbReference type="GO" id="GO:1904036">
    <property type="term" value="P:negative regulation of epithelial cell apoptotic process"/>
    <property type="evidence" value="ECO:0007669"/>
    <property type="project" value="Ensembl"/>
</dbReference>
<dbReference type="GO" id="GO:0050680">
    <property type="term" value="P:negative regulation of epithelial cell proliferation"/>
    <property type="evidence" value="ECO:0000318"/>
    <property type="project" value="GO_Central"/>
</dbReference>
<dbReference type="GO" id="GO:0060770">
    <property type="term" value="P:negative regulation of epithelial cell proliferation involved in prostate gland development"/>
    <property type="evidence" value="ECO:0007669"/>
    <property type="project" value="Ensembl"/>
</dbReference>
<dbReference type="GO" id="GO:0045930">
    <property type="term" value="P:negative regulation of mitotic cell cycle"/>
    <property type="evidence" value="ECO:0000318"/>
    <property type="project" value="GO_Central"/>
</dbReference>
<dbReference type="GO" id="GO:1904706">
    <property type="term" value="P:negative regulation of vascular associated smooth muscle cell proliferation"/>
    <property type="evidence" value="ECO:0007669"/>
    <property type="project" value="Ensembl"/>
</dbReference>
<dbReference type="GO" id="GO:0007219">
    <property type="term" value="P:Notch signaling pathway"/>
    <property type="evidence" value="ECO:0007669"/>
    <property type="project" value="Ensembl"/>
</dbReference>
<dbReference type="GO" id="GO:0051168">
    <property type="term" value="P:nuclear export"/>
    <property type="evidence" value="ECO:0007669"/>
    <property type="project" value="Ensembl"/>
</dbReference>
<dbReference type="GO" id="GO:0001890">
    <property type="term" value="P:placenta development"/>
    <property type="evidence" value="ECO:0007669"/>
    <property type="project" value="Ensembl"/>
</dbReference>
<dbReference type="GO" id="GO:0008284">
    <property type="term" value="P:positive regulation of cell population proliferation"/>
    <property type="evidence" value="ECO:0007669"/>
    <property type="project" value="Ensembl"/>
</dbReference>
<dbReference type="GO" id="GO:0031116">
    <property type="term" value="P:positive regulation of microtubule polymerization"/>
    <property type="evidence" value="ECO:0007669"/>
    <property type="project" value="Ensembl"/>
</dbReference>
<dbReference type="GO" id="GO:0045732">
    <property type="term" value="P:positive regulation of protein catabolic process"/>
    <property type="evidence" value="ECO:0007669"/>
    <property type="project" value="Ensembl"/>
</dbReference>
<dbReference type="GO" id="GO:0006813">
    <property type="term" value="P:potassium ion transport"/>
    <property type="evidence" value="ECO:0007669"/>
    <property type="project" value="Ensembl"/>
</dbReference>
<dbReference type="GO" id="GO:0030334">
    <property type="term" value="P:regulation of cell migration"/>
    <property type="evidence" value="ECO:0007669"/>
    <property type="project" value="Ensembl"/>
</dbReference>
<dbReference type="GO" id="GO:0007096">
    <property type="term" value="P:regulation of exit from mitosis"/>
    <property type="evidence" value="ECO:0007669"/>
    <property type="project" value="Ensembl"/>
</dbReference>
<dbReference type="GO" id="GO:2000045">
    <property type="term" value="P:regulation of G1/S transition of mitotic cell cycle"/>
    <property type="evidence" value="ECO:0007669"/>
    <property type="project" value="Ensembl"/>
</dbReference>
<dbReference type="GO" id="GO:1902746">
    <property type="term" value="P:regulation of lens fiber cell differentiation"/>
    <property type="evidence" value="ECO:0007669"/>
    <property type="project" value="Ensembl"/>
</dbReference>
<dbReference type="GO" id="GO:0007605">
    <property type="term" value="P:sensory perception of sound"/>
    <property type="evidence" value="ECO:0007669"/>
    <property type="project" value="Ensembl"/>
</dbReference>
<dbReference type="FunFam" id="4.10.365.10:FF:000001">
    <property type="entry name" value="Cyclin-dependent kinase inhibitor 1B"/>
    <property type="match status" value="1"/>
</dbReference>
<dbReference type="Gene3D" id="4.10.365.10">
    <property type="entry name" value="p27"/>
    <property type="match status" value="1"/>
</dbReference>
<dbReference type="InterPro" id="IPR003175">
    <property type="entry name" value="CDI_dom"/>
</dbReference>
<dbReference type="InterPro" id="IPR044898">
    <property type="entry name" value="CDI_dom_sf"/>
</dbReference>
<dbReference type="PANTHER" id="PTHR10265">
    <property type="entry name" value="CYCLIN-DEPENDENT KINASE INHIBITOR 1"/>
    <property type="match status" value="1"/>
</dbReference>
<dbReference type="PANTHER" id="PTHR10265:SF9">
    <property type="entry name" value="CYCLIN-DEPENDENT KINASE INHIBITOR 1B"/>
    <property type="match status" value="1"/>
</dbReference>
<dbReference type="Pfam" id="PF02234">
    <property type="entry name" value="CDI"/>
    <property type="match status" value="1"/>
</dbReference>
<accession>O19001</accession>
<keyword id="KW-0131">Cell cycle</keyword>
<keyword id="KW-0963">Cytoplasm</keyword>
<keyword id="KW-0967">Endosome</keyword>
<keyword id="KW-0539">Nucleus</keyword>
<keyword id="KW-0597">Phosphoprotein</keyword>
<keyword id="KW-0649">Protein kinase inhibitor</keyword>
<keyword id="KW-1185">Reference proteome</keyword>
<keyword id="KW-0832">Ubl conjugation</keyword>
<proteinExistence type="evidence at transcript level"/>
<comment type="function">
    <text evidence="3">Important regulator of cell cycle progression. Inhibits the kinase activity of CDK2 bound to cyclin A, but has little inhibitory activity on CDK2 bound to SPDYA. Involved in G1 arrest. Potent inhibitor of cyclin E- and cyclin A-CDK2 complexes. Forms a complex with cyclin type D-CDK4 complexes and is involved in the assembly, stability, and modulation of CCND1-CDK4 complex activation. Acts either as an inhibitor or an activator of cyclin type D-CDK4 complexes depending on its phosphorylation state and/or stoichometry.</text>
</comment>
<comment type="subunit">
    <text evidence="1 3">Forms a ternary complex composed of CCNE1, CDK2 and CDKN1B. Interacts directly with CCNE1; the interaction is inhibited by CDK2-dependent phosphorylation on Thr-187. Interacts with COPS5, subunit of the COP9 signalosome complex; the interaction leads to CDKN1B degradation. Interacts with NUP50; the interaction leads to nuclear import and degradation of phosphorylated CDKN1B. Interacts with CCND1 and SNX6 (By similarity). Interacts (Thr-198-phosphorylated form) with 14-3-3 proteins, binds strongly YWHAQ, weakly YWHAE and YWHAH, but not YWHAB nor YWHAZ; the interaction with YWHAQ results in translocation to the cytoplasm. Interacts with AKT1 and LYN; the interactions lead to cytoplasmic mislocation, phosphorylation of CDKN1B and inhibition of cell cycle arrest. Forms a ternary complex with CCNA2 and CDK2; CDKN1B inhibits the kinase activity of CDK2 through conformational rearrangements. Interacts (unphosphorylated form) with CDK2. Forms a complex with CDK2 and SPDYA, but does not directly interact with SPDYA. Forms a ternary complex composed of cyclin D, CDK4 and CDKN1B. Interacts (phosphorylated on Tyr-88 and Tyr-89) with CDK4; the interaction is required for cyclin D and CDK4 complex assembly, induces nuclear translocation and activates the CDK4 kinase activity. Interacts with GRB2. Interacts with PIM1. Identified in a complex with SKP1, SKP2 and CKS1B. Interacts with UHMK1; the interaction leads to cytoplasmic mislocation, phosphorylation of CDKN1B and inhibition of cell cycle arrest. Also interacts with CDK1. Dephosphorylated on Thr-187 by PPM1H, leading to CDKN1B stability (By similarity).</text>
</comment>
<comment type="subcellular location">
    <subcellularLocation>
        <location evidence="1">Nucleus</location>
    </subcellularLocation>
    <subcellularLocation>
        <location evidence="1">Cytoplasm</location>
    </subcellularLocation>
    <subcellularLocation>
        <location evidence="1">Endosome</location>
    </subcellularLocation>
    <text evidence="1">Nuclear and cytoplasmic in quiescent cells. AKT- or RSK-mediated phosphorylation on Thr-198, binds 14-3-3, translocates to the cytoplasm and promotes cell cycle progression. Mitogen-activated UHMK1 phosphorylation on Ser-10 also results in translocation to the cytoplasm and cell cycle progression. Phosphorylation on Ser-10 facilitates nuclear export. Translocates to the nucleus on phosphorylation of Tyr-88 and Tyr-89 (By similarity). Colocalizes at the endosome with SNX6; this leads to lysosomal degradation (By similarity).</text>
</comment>
<comment type="domain">
    <text evidence="1">A peptide sequence containing only AA 28-79 retains substantial Kip1 cyclin A/CDK2 inhibitory activity.</text>
</comment>
<comment type="PTM">
    <text evidence="3">Phosphorylated; phosphorylation occurs on serine, threonine and tyrosine residues. Phosphorylation on Ser-10 is the major site of phosphorylation in resting cells, takes place at the G(0)-G(1) phase and leads to protein stability. Phosphorylation on other sites is greatly enhanced by mitogens, growth factors, cMYC and in certain cancer cell lines. The phosphorylated form found in the cytoplasm is inactivate. Phosphorylation on Thr-198 is required for interaction with 14-3-3 proteins. Phosphorylation on Thr-187, by CDK1 and CDK2 leads to protein ubiquitination and proteasomal degradation. Tyrosine phosphorylation promotes this process. Phosphorylation by PKB/AKT1 can be suppressed by LY294002, an inhibitor of the catalytic subunit of PI3K. Phosphorylation on Tyr-88 and Tyr-89 has no effect on binding CDK2, but is required for binding CDK4. Dephosphorylated on tyrosine residues by G-CSF (By similarity). Dephosphorylated on Thr-187 by PPM1H, leading to CDKN1B stability (By similarity).</text>
</comment>
<comment type="PTM">
    <text evidence="1">Ubiquitinated; in the cytoplasm by the KPC complex (composed of RNF123/KPC1 and UBAC1/KPC2) and, in the nucleus, by SCF(SKP2). The latter requires prior phosphorylation on Thr-187. Ubiquitinated; by a TRIM21-containing SCF(SKP2)-like complex; leads to its degradation (By similarity).</text>
</comment>
<comment type="PTM">
    <text evidence="1">Subject to degradation in the lysosome. Interaction with SNX6 promotes lysosomal degradation (By similarity).</text>
</comment>
<comment type="similarity">
    <text evidence="6">Belongs to the CDI family.</text>
</comment>